<reference key="1">
    <citation type="submission" date="2007-05" db="EMBL/GenBank/DDBJ databases">
        <title>Complete sequence of Thermosipho melanesiensis BI429.</title>
        <authorList>
            <consortium name="US DOE Joint Genome Institute"/>
            <person name="Copeland A."/>
            <person name="Lucas S."/>
            <person name="Lapidus A."/>
            <person name="Barry K."/>
            <person name="Glavina del Rio T."/>
            <person name="Dalin E."/>
            <person name="Tice H."/>
            <person name="Pitluck S."/>
            <person name="Chertkov O."/>
            <person name="Brettin T."/>
            <person name="Bruce D."/>
            <person name="Detter J.C."/>
            <person name="Han C."/>
            <person name="Schmutz J."/>
            <person name="Larimer F."/>
            <person name="Land M."/>
            <person name="Hauser L."/>
            <person name="Kyrpides N."/>
            <person name="Mikhailova N."/>
            <person name="Nelson K."/>
            <person name="Gogarten J.P."/>
            <person name="Noll K."/>
            <person name="Richardson P."/>
        </authorList>
    </citation>
    <scope>NUCLEOTIDE SEQUENCE [LARGE SCALE GENOMIC DNA]</scope>
    <source>
        <strain>DSM 12029 / CIP 104789 / BI429</strain>
    </source>
</reference>
<feature type="chain" id="PRO_0000349843" description="tRNA-specific 2-thiouridylase MnmA">
    <location>
        <begin position="1"/>
        <end position="339"/>
    </location>
</feature>
<feature type="region of interest" description="Interaction with tRNA" evidence="1">
    <location>
        <begin position="126"/>
        <end position="128"/>
    </location>
</feature>
<feature type="active site" description="Nucleophile" evidence="1">
    <location>
        <position position="84"/>
    </location>
</feature>
<feature type="active site" description="Cysteine persulfide intermediate" evidence="1">
    <location>
        <position position="176"/>
    </location>
</feature>
<feature type="binding site" evidence="1">
    <location>
        <position position="13"/>
    </location>
    <ligand>
        <name>ATP</name>
        <dbReference type="ChEBI" id="CHEBI:30616"/>
    </ligand>
</feature>
<feature type="binding site" evidence="1">
    <location>
        <position position="108"/>
    </location>
    <ligand>
        <name>ATP</name>
        <dbReference type="ChEBI" id="CHEBI:30616"/>
    </ligand>
</feature>
<feature type="site" description="Interaction with tRNA" evidence="1">
    <location>
        <position position="109"/>
    </location>
</feature>
<feature type="site" description="Interaction with tRNA" evidence="1">
    <location>
        <position position="310"/>
    </location>
</feature>
<feature type="disulfide bond" description="Alternate" evidence="1">
    <location>
        <begin position="84"/>
        <end position="176"/>
    </location>
</feature>
<protein>
    <recommendedName>
        <fullName>tRNA-specific 2-thiouridylase MnmA</fullName>
        <ecNumber>2.8.1.13</ecNumber>
    </recommendedName>
</protein>
<proteinExistence type="inferred from homology"/>
<name>MNMA_THEM4</name>
<evidence type="ECO:0000250" key="1"/>
<evidence type="ECO:0000305" key="2"/>
<dbReference type="EC" id="2.8.1.13"/>
<dbReference type="EMBL" id="CP000716">
    <property type="protein sequence ID" value="ABR31404.1"/>
    <property type="molecule type" value="Genomic_DNA"/>
</dbReference>
<dbReference type="SMR" id="A6LNA3"/>
<dbReference type="STRING" id="391009.Tmel_1559"/>
<dbReference type="KEGG" id="tme:Tmel_1559"/>
<dbReference type="eggNOG" id="COG0482">
    <property type="taxonomic scope" value="Bacteria"/>
</dbReference>
<dbReference type="HOGENOM" id="CLU_035188_0_0_0"/>
<dbReference type="Proteomes" id="UP000001110">
    <property type="component" value="Chromosome"/>
</dbReference>
<dbReference type="GO" id="GO:0005737">
    <property type="term" value="C:cytoplasm"/>
    <property type="evidence" value="ECO:0007669"/>
    <property type="project" value="UniProtKB-SubCell"/>
</dbReference>
<dbReference type="GO" id="GO:0005524">
    <property type="term" value="F:ATP binding"/>
    <property type="evidence" value="ECO:0007669"/>
    <property type="project" value="UniProtKB-KW"/>
</dbReference>
<dbReference type="GO" id="GO:0000049">
    <property type="term" value="F:tRNA binding"/>
    <property type="evidence" value="ECO:0007669"/>
    <property type="project" value="UniProtKB-KW"/>
</dbReference>
<dbReference type="GO" id="GO:0103016">
    <property type="term" value="F:tRNA-uridine 2-sulfurtransferase activity"/>
    <property type="evidence" value="ECO:0007669"/>
    <property type="project" value="UniProtKB-EC"/>
</dbReference>
<dbReference type="GO" id="GO:0002143">
    <property type="term" value="P:tRNA wobble position uridine thiolation"/>
    <property type="evidence" value="ECO:0007669"/>
    <property type="project" value="TreeGrafter"/>
</dbReference>
<dbReference type="CDD" id="cd01998">
    <property type="entry name" value="MnmA_TRMU-like"/>
    <property type="match status" value="1"/>
</dbReference>
<dbReference type="Gene3D" id="2.30.30.280">
    <property type="entry name" value="Adenine nucleotide alpha hydrolases-like domains"/>
    <property type="match status" value="1"/>
</dbReference>
<dbReference type="Gene3D" id="3.40.50.620">
    <property type="entry name" value="HUPs"/>
    <property type="match status" value="1"/>
</dbReference>
<dbReference type="Gene3D" id="2.40.30.10">
    <property type="entry name" value="Translation factors"/>
    <property type="match status" value="1"/>
</dbReference>
<dbReference type="InterPro" id="IPR004506">
    <property type="entry name" value="MnmA-like"/>
</dbReference>
<dbReference type="InterPro" id="IPR046885">
    <property type="entry name" value="MnmA-like_C"/>
</dbReference>
<dbReference type="InterPro" id="IPR046884">
    <property type="entry name" value="MnmA-like_central"/>
</dbReference>
<dbReference type="InterPro" id="IPR023382">
    <property type="entry name" value="MnmA-like_central_sf"/>
</dbReference>
<dbReference type="InterPro" id="IPR014729">
    <property type="entry name" value="Rossmann-like_a/b/a_fold"/>
</dbReference>
<dbReference type="NCBIfam" id="NF001138">
    <property type="entry name" value="PRK00143.1"/>
    <property type="match status" value="1"/>
</dbReference>
<dbReference type="NCBIfam" id="TIGR00420">
    <property type="entry name" value="trmU"/>
    <property type="match status" value="1"/>
</dbReference>
<dbReference type="PANTHER" id="PTHR11933:SF5">
    <property type="entry name" value="MITOCHONDRIAL TRNA-SPECIFIC 2-THIOURIDYLASE 1"/>
    <property type="match status" value="1"/>
</dbReference>
<dbReference type="PANTHER" id="PTHR11933">
    <property type="entry name" value="TRNA 5-METHYLAMINOMETHYL-2-THIOURIDYLATE -METHYLTRANSFERASE"/>
    <property type="match status" value="1"/>
</dbReference>
<dbReference type="Pfam" id="PF03054">
    <property type="entry name" value="tRNA_Me_trans"/>
    <property type="match status" value="1"/>
</dbReference>
<dbReference type="Pfam" id="PF20258">
    <property type="entry name" value="tRNA_Me_trans_C"/>
    <property type="match status" value="1"/>
</dbReference>
<dbReference type="Pfam" id="PF20259">
    <property type="entry name" value="tRNA_Me_trans_M"/>
    <property type="match status" value="1"/>
</dbReference>
<dbReference type="SUPFAM" id="SSF52402">
    <property type="entry name" value="Adenine nucleotide alpha hydrolases-like"/>
    <property type="match status" value="1"/>
</dbReference>
<accession>A6LNA3</accession>
<gene>
    <name type="primary">mnmA</name>
    <name type="ordered locus">Tmel_1559</name>
</gene>
<keyword id="KW-0067">ATP-binding</keyword>
<keyword id="KW-0963">Cytoplasm</keyword>
<keyword id="KW-1015">Disulfide bond</keyword>
<keyword id="KW-0547">Nucleotide-binding</keyword>
<keyword id="KW-0694">RNA-binding</keyword>
<keyword id="KW-0808">Transferase</keyword>
<keyword id="KW-0819">tRNA processing</keyword>
<keyword id="KW-0820">tRNA-binding</keyword>
<organism>
    <name type="scientific">Thermosipho melanesiensis (strain DSM 12029 / CIP 104789 / BI429)</name>
    <dbReference type="NCBI Taxonomy" id="391009"/>
    <lineage>
        <taxon>Bacteria</taxon>
        <taxon>Thermotogati</taxon>
        <taxon>Thermotogota</taxon>
        <taxon>Thermotogae</taxon>
        <taxon>Thermotogales</taxon>
        <taxon>Fervidobacteriaceae</taxon>
        <taxon>Thermosipho</taxon>
    </lineage>
</organism>
<comment type="function">
    <text evidence="1">Catalyzes the 2-thiolation of uridine at the wobble position (U34) of tRNA, leading to the formation of s(2)U34.</text>
</comment>
<comment type="catalytic activity">
    <reaction>
        <text>S-sulfanyl-L-cysteinyl-[protein] + uridine(34) in tRNA + AH2 + ATP = 2-thiouridine(34) in tRNA + L-cysteinyl-[protein] + A + AMP + diphosphate + H(+)</text>
        <dbReference type="Rhea" id="RHEA:47032"/>
        <dbReference type="Rhea" id="RHEA-COMP:10131"/>
        <dbReference type="Rhea" id="RHEA-COMP:11726"/>
        <dbReference type="Rhea" id="RHEA-COMP:11727"/>
        <dbReference type="Rhea" id="RHEA-COMP:11728"/>
        <dbReference type="ChEBI" id="CHEBI:13193"/>
        <dbReference type="ChEBI" id="CHEBI:15378"/>
        <dbReference type="ChEBI" id="CHEBI:17499"/>
        <dbReference type="ChEBI" id="CHEBI:29950"/>
        <dbReference type="ChEBI" id="CHEBI:30616"/>
        <dbReference type="ChEBI" id="CHEBI:33019"/>
        <dbReference type="ChEBI" id="CHEBI:61963"/>
        <dbReference type="ChEBI" id="CHEBI:65315"/>
        <dbReference type="ChEBI" id="CHEBI:87170"/>
        <dbReference type="ChEBI" id="CHEBI:456215"/>
        <dbReference type="EC" id="2.8.1.13"/>
    </reaction>
</comment>
<comment type="subcellular location">
    <subcellularLocation>
        <location evidence="1">Cytoplasm</location>
    </subcellularLocation>
</comment>
<comment type="similarity">
    <text evidence="2">Belongs to the MnmA/TRMU family.</text>
</comment>
<sequence length="339" mass="39110">MKKKGYAVTAYHLKTVPDSLYLTKQIKHKVCCSPSDTFDAKKVAQKFGVELKIIHVENVFRETIIKYFINEYKRGRTPNPCFFCNDWIKFGVLLERIIQDGNDYVASGHYALLRDGKLYKAKNKEKDQSYFLASIKREKLGYLVFPNGEYNKDEIRNIAKDLNIHIHSKEDSQDLCFIPDNNIYGFLKENGVGFKEGLIIDTKGNILGTHKGLSNYTIGQRKIGIAVRERMYVLRKDFEKNLLVVGKKGEVFNNKFTVSKLNFLQDVYKKIEGYVKVRKKFKEVKCRVYVDNDNLYVETREPIFAITPGQIAVIYDEDGAVIVSGVIEKEGWNGFESFN</sequence>